<name>CCD33_MOUSE</name>
<organism>
    <name type="scientific">Mus musculus</name>
    <name type="common">Mouse</name>
    <dbReference type="NCBI Taxonomy" id="10090"/>
    <lineage>
        <taxon>Eukaryota</taxon>
        <taxon>Metazoa</taxon>
        <taxon>Chordata</taxon>
        <taxon>Craniata</taxon>
        <taxon>Vertebrata</taxon>
        <taxon>Euteleostomi</taxon>
        <taxon>Mammalia</taxon>
        <taxon>Eutheria</taxon>
        <taxon>Euarchontoglires</taxon>
        <taxon>Glires</taxon>
        <taxon>Rodentia</taxon>
        <taxon>Myomorpha</taxon>
        <taxon>Muroidea</taxon>
        <taxon>Muridae</taxon>
        <taxon>Murinae</taxon>
        <taxon>Mus</taxon>
        <taxon>Mus</taxon>
    </lineage>
</organism>
<dbReference type="EMBL" id="AB048860">
    <property type="protein sequence ID" value="BAD08245.1"/>
    <property type="molecule type" value="mRNA"/>
</dbReference>
<dbReference type="EMBL" id="AK015980">
    <property type="protein sequence ID" value="BAB30064.1"/>
    <property type="molecule type" value="mRNA"/>
</dbReference>
<dbReference type="EMBL" id="AK145264">
    <property type="protein sequence ID" value="BAE26332.1"/>
    <property type="molecule type" value="mRNA"/>
</dbReference>
<dbReference type="EMBL" id="AK166434">
    <property type="protein sequence ID" value="BAE38774.1"/>
    <property type="molecule type" value="mRNA"/>
</dbReference>
<dbReference type="EMBL" id="BC116291">
    <property type="protein sequence ID" value="AAI16292.1"/>
    <property type="molecule type" value="mRNA"/>
</dbReference>
<dbReference type="EMBL" id="BC116292">
    <property type="protein sequence ID" value="AAI16293.1"/>
    <property type="molecule type" value="mRNA"/>
</dbReference>
<dbReference type="CCDS" id="CCDS40654.1">
    <molecule id="Q3ULW6-3"/>
</dbReference>
<dbReference type="CCDS" id="CCDS52811.1">
    <molecule id="Q3ULW6-1"/>
</dbReference>
<dbReference type="CCDS" id="CCDS81006.1">
    <molecule id="Q3ULW6-4"/>
</dbReference>
<dbReference type="RefSeq" id="NP_001298014.1">
    <property type="nucleotide sequence ID" value="NM_001311085.1"/>
</dbReference>
<dbReference type="RefSeq" id="NP_083488.1">
    <property type="nucleotide sequence ID" value="NM_029212.3"/>
</dbReference>
<dbReference type="SMR" id="Q3ULW6"/>
<dbReference type="FunCoup" id="Q3ULW6">
    <property type="interactions" value="69"/>
</dbReference>
<dbReference type="STRING" id="10090.ENSMUSP00000096279"/>
<dbReference type="iPTMnet" id="Q3ULW6"/>
<dbReference type="PhosphoSitePlus" id="Q3ULW6"/>
<dbReference type="PaxDb" id="10090-ENSMUSP00000096279"/>
<dbReference type="ProteomicsDB" id="283724">
    <molecule id="Q3ULW6-1"/>
</dbReference>
<dbReference type="ProteomicsDB" id="283725">
    <molecule id="Q3ULW6-2"/>
</dbReference>
<dbReference type="ProteomicsDB" id="283726">
    <molecule id="Q3ULW6-3"/>
</dbReference>
<dbReference type="ProteomicsDB" id="283727">
    <molecule id="Q3ULW6-4"/>
</dbReference>
<dbReference type="ProteomicsDB" id="283728">
    <molecule id="Q3ULW6-5"/>
</dbReference>
<dbReference type="Antibodypedia" id="52555">
    <property type="antibodies" value="51 antibodies from 14 providers"/>
</dbReference>
<dbReference type="Ensembl" id="ENSMUST00000098681.4">
    <molecule id="Q3ULW6-2"/>
    <property type="protein sequence ID" value="ENSMUSP00000096278.4"/>
    <property type="gene ID" value="ENSMUSG00000037716.16"/>
</dbReference>
<dbReference type="GeneID" id="382077"/>
<dbReference type="KEGG" id="mmu:382077"/>
<dbReference type="UCSC" id="uc009pwg.1">
    <molecule id="Q3ULW6-5"/>
    <property type="organism name" value="mouse"/>
</dbReference>
<dbReference type="UCSC" id="uc009pwh.1">
    <molecule id="Q3ULW6-2"/>
    <property type="organism name" value="mouse"/>
</dbReference>
<dbReference type="AGR" id="MGI:1922464"/>
<dbReference type="CTD" id="80125"/>
<dbReference type="MGI" id="MGI:1922464">
    <property type="gene designation" value="Ccdc33"/>
</dbReference>
<dbReference type="VEuPathDB" id="HostDB:ENSMUSG00000037716"/>
<dbReference type="eggNOG" id="KOG3544">
    <property type="taxonomic scope" value="Eukaryota"/>
</dbReference>
<dbReference type="GeneTree" id="ENSGT00390000017366"/>
<dbReference type="HOGENOM" id="CLU_087317_0_0_1"/>
<dbReference type="InParanoid" id="Q3ULW6"/>
<dbReference type="OrthoDB" id="552574at2759"/>
<dbReference type="PhylomeDB" id="Q3ULW6"/>
<dbReference type="BioGRID-ORCS" id="382077">
    <property type="hits" value="3 hits in 76 CRISPR screens"/>
</dbReference>
<dbReference type="PRO" id="PR:Q3ULW6"/>
<dbReference type="Proteomes" id="UP000000589">
    <property type="component" value="Chromosome 9"/>
</dbReference>
<dbReference type="RNAct" id="Q3ULW6">
    <property type="molecule type" value="protein"/>
</dbReference>
<dbReference type="Bgee" id="ENSMUSG00000037716">
    <property type="expression patterns" value="Expressed in spermatid and 37 other cell types or tissues"/>
</dbReference>
<dbReference type="ExpressionAtlas" id="Q3ULW6">
    <property type="expression patterns" value="baseline and differential"/>
</dbReference>
<dbReference type="GO" id="GO:0005777">
    <property type="term" value="C:peroxisome"/>
    <property type="evidence" value="ECO:0000314"/>
    <property type="project" value="UniProtKB"/>
</dbReference>
<dbReference type="GO" id="GO:0007283">
    <property type="term" value="P:spermatogenesis"/>
    <property type="evidence" value="ECO:0000303"/>
    <property type="project" value="UniProtKB"/>
</dbReference>
<dbReference type="CDD" id="cd00030">
    <property type="entry name" value="C2"/>
    <property type="match status" value="1"/>
</dbReference>
<dbReference type="Gene3D" id="2.60.40.150">
    <property type="entry name" value="C2 domain"/>
    <property type="match status" value="1"/>
</dbReference>
<dbReference type="InterPro" id="IPR000008">
    <property type="entry name" value="C2_dom"/>
</dbReference>
<dbReference type="InterPro" id="IPR035892">
    <property type="entry name" value="C2_domain_sf"/>
</dbReference>
<dbReference type="InterPro" id="IPR039889">
    <property type="entry name" value="CCD33"/>
</dbReference>
<dbReference type="PANTHER" id="PTHR21623:SF2">
    <property type="entry name" value="COILED-COIL DOMAIN-CONTAINING PROTEIN 33"/>
    <property type="match status" value="1"/>
</dbReference>
<dbReference type="PANTHER" id="PTHR21623">
    <property type="entry name" value="SPERIOLIN-BINDING FACTOR"/>
    <property type="match status" value="1"/>
</dbReference>
<dbReference type="Pfam" id="PF00168">
    <property type="entry name" value="C2"/>
    <property type="match status" value="1"/>
</dbReference>
<dbReference type="SUPFAM" id="SSF49562">
    <property type="entry name" value="C2 domain (Calcium/lipid-binding domain, CaLB)"/>
    <property type="match status" value="1"/>
</dbReference>
<dbReference type="PROSITE" id="PS50004">
    <property type="entry name" value="C2"/>
    <property type="match status" value="1"/>
</dbReference>
<feature type="chain" id="PRO_0000307644" description="Coiled-coil domain-containing protein 33">
    <location>
        <begin position="1"/>
        <end position="985"/>
    </location>
</feature>
<feature type="domain" description="C2" evidence="2">
    <location>
        <begin position="263"/>
        <end position="398"/>
    </location>
</feature>
<feature type="region of interest" description="Disordered" evidence="3">
    <location>
        <begin position="228"/>
        <end position="263"/>
    </location>
</feature>
<feature type="region of interest" description="Disordered" evidence="3">
    <location>
        <begin position="821"/>
        <end position="842"/>
    </location>
</feature>
<feature type="region of interest" description="Disordered" evidence="3">
    <location>
        <begin position="931"/>
        <end position="985"/>
    </location>
</feature>
<feature type="coiled-coil region" evidence="1">
    <location>
        <begin position="599"/>
        <end position="745"/>
    </location>
</feature>
<feature type="coiled-coil region" evidence="1">
    <location>
        <begin position="885"/>
        <end position="928"/>
    </location>
</feature>
<feature type="compositionally biased region" description="Polar residues" evidence="3">
    <location>
        <begin position="946"/>
        <end position="956"/>
    </location>
</feature>
<feature type="compositionally biased region" description="Polar residues" evidence="3">
    <location>
        <begin position="972"/>
        <end position="985"/>
    </location>
</feature>
<feature type="splice variant" id="VSP_028760" description="In isoform 3, isoform 4 and isoform 5." evidence="4 5 6">
    <location>
        <begin position="1"/>
        <end position="245"/>
    </location>
</feature>
<feature type="splice variant" id="VSP_028761" description="In isoform 3, isoform 4 and isoform 5." evidence="4 5 6">
    <original>PWQHPAQ</original>
    <variation>MGRQKTK</variation>
    <location>
        <begin position="246"/>
        <end position="252"/>
    </location>
</feature>
<feature type="splice variant" id="VSP_028762" description="In isoform 2." evidence="5">
    <original>VPEEPQGRLDTSQDPYPAANYLAPCN</original>
    <variation>AELLKRETLNWKSPVTGFSQPLLPHL</variation>
    <location>
        <begin position="253"/>
        <end position="278"/>
    </location>
</feature>
<feature type="splice variant" id="VSP_028763" description="In isoform 2." evidence="5">
    <location>
        <begin position="279"/>
        <end position="985"/>
    </location>
</feature>
<feature type="splice variant" id="VSP_028764" description="In isoform 5." evidence="5">
    <original>DLILKVMDNKRKKELVSYDIPIKYLRIFHPYQFKLEKVFLRGVNEP</original>
    <variation>GEAGGWAPVCGRCKWLEPHLPWKAKAVSLSTAGGQLNTSLGSDKSI</variation>
    <location>
        <begin position="352"/>
        <end position="397"/>
    </location>
</feature>
<feature type="splice variant" id="VSP_028765" description="In isoform 3 and isoform 4." evidence="4 6">
    <original>K</original>
    <variation>KSEKKDEAAAKTCLYATVVRKGSLLPRYVGCDHTALE</variation>
    <location>
        <position position="388"/>
    </location>
</feature>
<feature type="splice variant" id="VSP_028766" description="In isoform 5." evidence="5">
    <location>
        <begin position="398"/>
        <end position="985"/>
    </location>
</feature>
<feature type="splice variant" id="VSP_028767" description="In isoform 3 and isoform 4." evidence="4 6">
    <original>M</original>
    <variation>IDTNLKTINGEAPSVNLSFQLLSSE</variation>
    <location>
        <position position="547"/>
    </location>
</feature>
<feature type="splice variant" id="VSP_028768" description="In isoform 4." evidence="4">
    <location>
        <position position="653"/>
    </location>
</feature>
<feature type="splice variant" id="VSP_028769" description="In isoform 3 and isoform 4." evidence="4 6">
    <location>
        <begin position="809"/>
        <end position="877"/>
    </location>
</feature>
<feature type="sequence conflict" description="In Ref. 3; AAI16293." evidence="7" ref="3">
    <original>K</original>
    <variation>R</variation>
    <location>
        <position position="364"/>
    </location>
</feature>
<feature type="sequence conflict" description="In Ref. 2; BAE26332." evidence="7" ref="2">
    <original>Q</original>
    <variation>H</variation>
    <location>
        <position position="383"/>
    </location>
</feature>
<feature type="sequence conflict" description="In Ref. 2; BAE26332." evidence="7" ref="2">
    <original>G</original>
    <variation>R</variation>
    <location>
        <position position="465"/>
    </location>
</feature>
<feature type="sequence conflict" description="In Ref. 1; BAD08245 and 3; AAI16293/AAI16292." evidence="7" ref="1 3">
    <original>A</original>
    <variation>T</variation>
    <location>
        <position position="588"/>
    </location>
</feature>
<feature type="sequence conflict" description="In Ref. 1; BAD08245 and 3; AAI16293/AAI16292." evidence="7" ref="1 3">
    <original>V</original>
    <variation>M</variation>
    <location>
        <position position="591"/>
    </location>
</feature>
<feature type="sequence conflict" description="In Ref. 1; BAD08245 and 3; AAI16293/AAI16292." evidence="7" ref="1 3">
    <original>M</original>
    <variation>V</variation>
    <location>
        <position position="767"/>
    </location>
</feature>
<feature type="sequence conflict" description="In Ref. 1; BAD08245 and 3; AAI16293/AAI16292." evidence="7" ref="1 3">
    <original>P</original>
    <variation>R</variation>
    <location>
        <position position="952"/>
    </location>
</feature>
<feature type="sequence conflict" description="In Ref. 1; BAD08245 and 3; AAI16293/AAI16292." evidence="7" ref="1 3">
    <original>P</original>
    <variation>T</variation>
    <location>
        <position position="960"/>
    </location>
</feature>
<accession>Q3ULW6</accession>
<accession>Q14B78</accession>
<accession>Q3TLL8</accession>
<accession>Q76MG4</accession>
<accession>Q9D4Z2</accession>
<sequence>MAFRGPDPYLPASLLSQRLKAGEKTLDLEFEILSVGFNEEGRYALRLSAENPLQAGSSAGVQLQVNDGDPLPACSAVTEVIEQQDPGQSLTFTRNKFIFTLPKGFCKNDGQSDAHLRVEALRLDGSSGQEAQRVGEAIFPIYPRPDEPRMNLTAQDHEDLYRYCGNLALLRASEDPTARHCGGLAYSVAFHVHRDPRSSVSDCQLEPSQPELQTSREALSDKIEESYMSPFSTDSDQEGLSWEAGPWQHPAQVPEEPQGRLDTSQDPYPAANYLAPCNKETITVTLYGATNLPAGKDGSEPWPYVVVKTTSEKANKHSPQAMTSVTSEPTRAPVWGDTVNVEIQAEDTGREDLILKVMDNKRKKELVSYDIPIKYLRIFHPYQFKLEKVFLRGVNEPLVNSLKPMVVIARVVPNYTEFKARQARRDPASVGLPLTQVSFPISSPMNFDVPRINQNGYPQLSKPGGPPEQPLWNQSFLFQARDGATSFSENTALVLEYYPSASMQSSEPWALNQPLGVSVLPLKSRLYHKMLTGKHLQGLQVERLPIMRPENFLTPNNSKALPTINPKILDENLGAIRESWSMSSLDSAQEVEELQPRDVEMNNYRRAMQKMAEDILALKKQANILEEENGMLRSHLSQQSIEEQSRAEEENLAVSMKQKLLLNELDMKRLRDRVQHLQNELIRKNDREKELLLLYQAQQPQAAQLRRYQDKLQKMKALEDTVRHQEKVIEKMEQILEERLCERKEPIPSNRPQGKPIMASGIPLGPMGETLAVDLYSMLLAENTRLRTELEKNRQQSAPIILQQQALPVDPRELGAGGDLAERLQDTNGPGHPKSTETLPAQVGVPGGYSTAQAAPGAPAVHKPKINIWSSGGMRTQDFLGGTSDKFNLLAKLEQAQSRILSLENQLEESARHWAREKQNLAIRLQEQQHGFGQPPNSIIIDQPNAGASKNPQQLSKLEPSLPSSDKKLNRPSDSQIEISNNQKT</sequence>
<gene>
    <name type="primary">Ccdc33</name>
</gene>
<proteinExistence type="evidence at transcript level"/>
<comment type="alternative products">
    <event type="alternative splicing"/>
    <isoform>
        <id>Q3ULW6-1</id>
        <name>1</name>
        <sequence type="displayed"/>
    </isoform>
    <isoform>
        <id>Q3ULW6-2</id>
        <name>2</name>
        <sequence type="described" ref="VSP_028762 VSP_028763"/>
    </isoform>
    <isoform>
        <id>Q3ULW6-3</id>
        <name>3</name>
        <sequence type="described" ref="VSP_028760 VSP_028761 VSP_028765 VSP_028767 VSP_028769"/>
    </isoform>
    <isoform>
        <id>Q3ULW6-4</id>
        <name>4</name>
        <sequence type="described" ref="VSP_028760 VSP_028761 VSP_028765 VSP_028767 VSP_028768 VSP_028769"/>
    </isoform>
    <isoform>
        <id>Q3ULW6-5</id>
        <name>5</name>
        <sequence type="described" ref="VSP_028760 VSP_028761 VSP_028764 VSP_028766"/>
    </isoform>
</comment>
<keyword id="KW-0025">Alternative splicing</keyword>
<keyword id="KW-0175">Coiled coil</keyword>
<keyword id="KW-1185">Reference proteome</keyword>
<protein>
    <recommendedName>
        <fullName>Coiled-coil domain-containing protein 33</fullName>
    </recommendedName>
    <alternativeName>
        <fullName>Speriolin-binding factor</fullName>
    </alternativeName>
</protein>
<evidence type="ECO:0000255" key="1"/>
<evidence type="ECO:0000255" key="2">
    <source>
        <dbReference type="PROSITE-ProRule" id="PRU00041"/>
    </source>
</evidence>
<evidence type="ECO:0000256" key="3">
    <source>
        <dbReference type="SAM" id="MobiDB-lite"/>
    </source>
</evidence>
<evidence type="ECO:0000303" key="4">
    <source>
    </source>
</evidence>
<evidence type="ECO:0000303" key="5">
    <source>
    </source>
</evidence>
<evidence type="ECO:0000303" key="6">
    <source ref="1"/>
</evidence>
<evidence type="ECO:0000305" key="7"/>
<reference key="1">
    <citation type="submission" date="2000-09" db="EMBL/GenBank/DDBJ databases">
        <title>Testis-specific leucine-zipper protein TZIP1 associates with speriolin.</title>
        <authorList>
            <person name="Goto M."/>
            <person name="Eddy E.M."/>
        </authorList>
    </citation>
    <scope>NUCLEOTIDE SEQUENCE [MRNA] (ISOFORM 3)</scope>
    <source>
        <strain>BALB/cJ</strain>
        <tissue>Testis</tissue>
    </source>
</reference>
<reference key="2">
    <citation type="journal article" date="2005" name="Science">
        <title>The transcriptional landscape of the mammalian genome.</title>
        <authorList>
            <person name="Carninci P."/>
            <person name="Kasukawa T."/>
            <person name="Katayama S."/>
            <person name="Gough J."/>
            <person name="Frith M.C."/>
            <person name="Maeda N."/>
            <person name="Oyama R."/>
            <person name="Ravasi T."/>
            <person name="Lenhard B."/>
            <person name="Wells C."/>
            <person name="Kodzius R."/>
            <person name="Shimokawa K."/>
            <person name="Bajic V.B."/>
            <person name="Brenner S.E."/>
            <person name="Batalov S."/>
            <person name="Forrest A.R."/>
            <person name="Zavolan M."/>
            <person name="Davis M.J."/>
            <person name="Wilming L.G."/>
            <person name="Aidinis V."/>
            <person name="Allen J.E."/>
            <person name="Ambesi-Impiombato A."/>
            <person name="Apweiler R."/>
            <person name="Aturaliya R.N."/>
            <person name="Bailey T.L."/>
            <person name="Bansal M."/>
            <person name="Baxter L."/>
            <person name="Beisel K.W."/>
            <person name="Bersano T."/>
            <person name="Bono H."/>
            <person name="Chalk A.M."/>
            <person name="Chiu K.P."/>
            <person name="Choudhary V."/>
            <person name="Christoffels A."/>
            <person name="Clutterbuck D.R."/>
            <person name="Crowe M.L."/>
            <person name="Dalla E."/>
            <person name="Dalrymple B.P."/>
            <person name="de Bono B."/>
            <person name="Della Gatta G."/>
            <person name="di Bernardo D."/>
            <person name="Down T."/>
            <person name="Engstrom P."/>
            <person name="Fagiolini M."/>
            <person name="Faulkner G."/>
            <person name="Fletcher C.F."/>
            <person name="Fukushima T."/>
            <person name="Furuno M."/>
            <person name="Futaki S."/>
            <person name="Gariboldi M."/>
            <person name="Georgii-Hemming P."/>
            <person name="Gingeras T.R."/>
            <person name="Gojobori T."/>
            <person name="Green R.E."/>
            <person name="Gustincich S."/>
            <person name="Harbers M."/>
            <person name="Hayashi Y."/>
            <person name="Hensch T.K."/>
            <person name="Hirokawa N."/>
            <person name="Hill D."/>
            <person name="Huminiecki L."/>
            <person name="Iacono M."/>
            <person name="Ikeo K."/>
            <person name="Iwama A."/>
            <person name="Ishikawa T."/>
            <person name="Jakt M."/>
            <person name="Kanapin A."/>
            <person name="Katoh M."/>
            <person name="Kawasawa Y."/>
            <person name="Kelso J."/>
            <person name="Kitamura H."/>
            <person name="Kitano H."/>
            <person name="Kollias G."/>
            <person name="Krishnan S.P."/>
            <person name="Kruger A."/>
            <person name="Kummerfeld S.K."/>
            <person name="Kurochkin I.V."/>
            <person name="Lareau L.F."/>
            <person name="Lazarevic D."/>
            <person name="Lipovich L."/>
            <person name="Liu J."/>
            <person name="Liuni S."/>
            <person name="McWilliam S."/>
            <person name="Madan Babu M."/>
            <person name="Madera M."/>
            <person name="Marchionni L."/>
            <person name="Matsuda H."/>
            <person name="Matsuzawa S."/>
            <person name="Miki H."/>
            <person name="Mignone F."/>
            <person name="Miyake S."/>
            <person name="Morris K."/>
            <person name="Mottagui-Tabar S."/>
            <person name="Mulder N."/>
            <person name="Nakano N."/>
            <person name="Nakauchi H."/>
            <person name="Ng P."/>
            <person name="Nilsson R."/>
            <person name="Nishiguchi S."/>
            <person name="Nishikawa S."/>
            <person name="Nori F."/>
            <person name="Ohara O."/>
            <person name="Okazaki Y."/>
            <person name="Orlando V."/>
            <person name="Pang K.C."/>
            <person name="Pavan W.J."/>
            <person name="Pavesi G."/>
            <person name="Pesole G."/>
            <person name="Petrovsky N."/>
            <person name="Piazza S."/>
            <person name="Reed J."/>
            <person name="Reid J.F."/>
            <person name="Ring B.Z."/>
            <person name="Ringwald M."/>
            <person name="Rost B."/>
            <person name="Ruan Y."/>
            <person name="Salzberg S.L."/>
            <person name="Sandelin A."/>
            <person name="Schneider C."/>
            <person name="Schoenbach C."/>
            <person name="Sekiguchi K."/>
            <person name="Semple C.A."/>
            <person name="Seno S."/>
            <person name="Sessa L."/>
            <person name="Sheng Y."/>
            <person name="Shibata Y."/>
            <person name="Shimada H."/>
            <person name="Shimada K."/>
            <person name="Silva D."/>
            <person name="Sinclair B."/>
            <person name="Sperling S."/>
            <person name="Stupka E."/>
            <person name="Sugiura K."/>
            <person name="Sultana R."/>
            <person name="Takenaka Y."/>
            <person name="Taki K."/>
            <person name="Tammoja K."/>
            <person name="Tan S.L."/>
            <person name="Tang S."/>
            <person name="Taylor M.S."/>
            <person name="Tegner J."/>
            <person name="Teichmann S.A."/>
            <person name="Ueda H.R."/>
            <person name="van Nimwegen E."/>
            <person name="Verardo R."/>
            <person name="Wei C.L."/>
            <person name="Yagi K."/>
            <person name="Yamanishi H."/>
            <person name="Zabarovsky E."/>
            <person name="Zhu S."/>
            <person name="Zimmer A."/>
            <person name="Hide W."/>
            <person name="Bult C."/>
            <person name="Grimmond S.M."/>
            <person name="Teasdale R.D."/>
            <person name="Liu E.T."/>
            <person name="Brusic V."/>
            <person name="Quackenbush J."/>
            <person name="Wahlestedt C."/>
            <person name="Mattick J.S."/>
            <person name="Hume D.A."/>
            <person name="Kai C."/>
            <person name="Sasaki D."/>
            <person name="Tomaru Y."/>
            <person name="Fukuda S."/>
            <person name="Kanamori-Katayama M."/>
            <person name="Suzuki M."/>
            <person name="Aoki J."/>
            <person name="Arakawa T."/>
            <person name="Iida J."/>
            <person name="Imamura K."/>
            <person name="Itoh M."/>
            <person name="Kato T."/>
            <person name="Kawaji H."/>
            <person name="Kawagashira N."/>
            <person name="Kawashima T."/>
            <person name="Kojima M."/>
            <person name="Kondo S."/>
            <person name="Konno H."/>
            <person name="Nakano K."/>
            <person name="Ninomiya N."/>
            <person name="Nishio T."/>
            <person name="Okada M."/>
            <person name="Plessy C."/>
            <person name="Shibata K."/>
            <person name="Shiraki T."/>
            <person name="Suzuki S."/>
            <person name="Tagami M."/>
            <person name="Waki K."/>
            <person name="Watahiki A."/>
            <person name="Okamura-Oho Y."/>
            <person name="Suzuki H."/>
            <person name="Kawai J."/>
            <person name="Hayashizaki Y."/>
        </authorList>
    </citation>
    <scope>NUCLEOTIDE SEQUENCE [LARGE SCALE MRNA] (ISOFORMS 1; 2 AND 5)</scope>
    <source>
        <strain>C57BL/6J</strain>
        <tissue>Mammary gland</tissue>
        <tissue>Testis</tissue>
    </source>
</reference>
<reference key="3">
    <citation type="journal article" date="2004" name="Genome Res.">
        <title>The status, quality, and expansion of the NIH full-length cDNA project: the Mammalian Gene Collection (MGC).</title>
        <authorList>
            <consortium name="The MGC Project Team"/>
        </authorList>
    </citation>
    <scope>NUCLEOTIDE SEQUENCE [LARGE SCALE MRNA] (ISOFORMS 3 AND 4)</scope>
</reference>